<reference key="1">
    <citation type="journal article" date="1999" name="Nature">
        <title>Sequence and analysis of chromosome 4 of the plant Arabidopsis thaliana.</title>
        <authorList>
            <person name="Mayer K.F.X."/>
            <person name="Schueller C."/>
            <person name="Wambutt R."/>
            <person name="Murphy G."/>
            <person name="Volckaert G."/>
            <person name="Pohl T."/>
            <person name="Duesterhoeft A."/>
            <person name="Stiekema W."/>
            <person name="Entian K.-D."/>
            <person name="Terryn N."/>
            <person name="Harris B."/>
            <person name="Ansorge W."/>
            <person name="Brandt P."/>
            <person name="Grivell L.A."/>
            <person name="Rieger M."/>
            <person name="Weichselgartner M."/>
            <person name="de Simone V."/>
            <person name="Obermaier B."/>
            <person name="Mache R."/>
            <person name="Mueller M."/>
            <person name="Kreis M."/>
            <person name="Delseny M."/>
            <person name="Puigdomenech P."/>
            <person name="Watson M."/>
            <person name="Schmidtheini T."/>
            <person name="Reichert B."/>
            <person name="Portetelle D."/>
            <person name="Perez-Alonso M."/>
            <person name="Boutry M."/>
            <person name="Bancroft I."/>
            <person name="Vos P."/>
            <person name="Hoheisel J."/>
            <person name="Zimmermann W."/>
            <person name="Wedler H."/>
            <person name="Ridley P."/>
            <person name="Langham S.-A."/>
            <person name="McCullagh B."/>
            <person name="Bilham L."/>
            <person name="Robben J."/>
            <person name="van der Schueren J."/>
            <person name="Grymonprez B."/>
            <person name="Chuang Y.-J."/>
            <person name="Vandenbussche F."/>
            <person name="Braeken M."/>
            <person name="Weltjens I."/>
            <person name="Voet M."/>
            <person name="Bastiaens I."/>
            <person name="Aert R."/>
            <person name="Defoor E."/>
            <person name="Weitzenegger T."/>
            <person name="Bothe G."/>
            <person name="Ramsperger U."/>
            <person name="Hilbert H."/>
            <person name="Braun M."/>
            <person name="Holzer E."/>
            <person name="Brandt A."/>
            <person name="Peters S."/>
            <person name="van Staveren M."/>
            <person name="Dirkse W."/>
            <person name="Mooijman P."/>
            <person name="Klein Lankhorst R."/>
            <person name="Rose M."/>
            <person name="Hauf J."/>
            <person name="Koetter P."/>
            <person name="Berneiser S."/>
            <person name="Hempel S."/>
            <person name="Feldpausch M."/>
            <person name="Lamberth S."/>
            <person name="Van den Daele H."/>
            <person name="De Keyser A."/>
            <person name="Buysshaert C."/>
            <person name="Gielen J."/>
            <person name="Villarroel R."/>
            <person name="De Clercq R."/>
            <person name="van Montagu M."/>
            <person name="Rogers J."/>
            <person name="Cronin A."/>
            <person name="Quail M.A."/>
            <person name="Bray-Allen S."/>
            <person name="Clark L."/>
            <person name="Doggett J."/>
            <person name="Hall S."/>
            <person name="Kay M."/>
            <person name="Lennard N."/>
            <person name="McLay K."/>
            <person name="Mayes R."/>
            <person name="Pettett A."/>
            <person name="Rajandream M.A."/>
            <person name="Lyne M."/>
            <person name="Benes V."/>
            <person name="Rechmann S."/>
            <person name="Borkova D."/>
            <person name="Bloecker H."/>
            <person name="Scharfe M."/>
            <person name="Grimm M."/>
            <person name="Loehnert T.-H."/>
            <person name="Dose S."/>
            <person name="de Haan M."/>
            <person name="Maarse A.C."/>
            <person name="Schaefer M."/>
            <person name="Mueller-Auer S."/>
            <person name="Gabel C."/>
            <person name="Fuchs M."/>
            <person name="Fartmann B."/>
            <person name="Granderath K."/>
            <person name="Dauner D."/>
            <person name="Herzl A."/>
            <person name="Neumann S."/>
            <person name="Argiriou A."/>
            <person name="Vitale D."/>
            <person name="Liguori R."/>
            <person name="Piravandi E."/>
            <person name="Massenet O."/>
            <person name="Quigley F."/>
            <person name="Clabauld G."/>
            <person name="Muendlein A."/>
            <person name="Felber R."/>
            <person name="Schnabl S."/>
            <person name="Hiller R."/>
            <person name="Schmidt W."/>
            <person name="Lecharny A."/>
            <person name="Aubourg S."/>
            <person name="Chefdor F."/>
            <person name="Cooke R."/>
            <person name="Berger C."/>
            <person name="Monfort A."/>
            <person name="Casacuberta E."/>
            <person name="Gibbons T."/>
            <person name="Weber N."/>
            <person name="Vandenbol M."/>
            <person name="Bargues M."/>
            <person name="Terol J."/>
            <person name="Torres A."/>
            <person name="Perez-Perez A."/>
            <person name="Purnelle B."/>
            <person name="Bent E."/>
            <person name="Johnson S."/>
            <person name="Tacon D."/>
            <person name="Jesse T."/>
            <person name="Heijnen L."/>
            <person name="Schwarz S."/>
            <person name="Scholler P."/>
            <person name="Heber S."/>
            <person name="Francs P."/>
            <person name="Bielke C."/>
            <person name="Frishman D."/>
            <person name="Haase D."/>
            <person name="Lemcke K."/>
            <person name="Mewes H.-W."/>
            <person name="Stocker S."/>
            <person name="Zaccaria P."/>
            <person name="Bevan M."/>
            <person name="Wilson R.K."/>
            <person name="de la Bastide M."/>
            <person name="Habermann K."/>
            <person name="Parnell L."/>
            <person name="Dedhia N."/>
            <person name="Gnoj L."/>
            <person name="Schutz K."/>
            <person name="Huang E."/>
            <person name="Spiegel L."/>
            <person name="Sekhon M."/>
            <person name="Murray J."/>
            <person name="Sheet P."/>
            <person name="Cordes M."/>
            <person name="Abu-Threideh J."/>
            <person name="Stoneking T."/>
            <person name="Kalicki J."/>
            <person name="Graves T."/>
            <person name="Harmon G."/>
            <person name="Edwards J."/>
            <person name="Latreille P."/>
            <person name="Courtney L."/>
            <person name="Cloud J."/>
            <person name="Abbott A."/>
            <person name="Scott K."/>
            <person name="Johnson D."/>
            <person name="Minx P."/>
            <person name="Bentley D."/>
            <person name="Fulton B."/>
            <person name="Miller N."/>
            <person name="Greco T."/>
            <person name="Kemp K."/>
            <person name="Kramer J."/>
            <person name="Fulton L."/>
            <person name="Mardis E."/>
            <person name="Dante M."/>
            <person name="Pepin K."/>
            <person name="Hillier L.W."/>
            <person name="Nelson J."/>
            <person name="Spieth J."/>
            <person name="Ryan E."/>
            <person name="Andrews S."/>
            <person name="Geisel C."/>
            <person name="Layman D."/>
            <person name="Du H."/>
            <person name="Ali J."/>
            <person name="Berghoff A."/>
            <person name="Jones K."/>
            <person name="Drone K."/>
            <person name="Cotton M."/>
            <person name="Joshu C."/>
            <person name="Antonoiu B."/>
            <person name="Zidanic M."/>
            <person name="Strong C."/>
            <person name="Sun H."/>
            <person name="Lamar B."/>
            <person name="Yordan C."/>
            <person name="Ma P."/>
            <person name="Zhong J."/>
            <person name="Preston R."/>
            <person name="Vil D."/>
            <person name="Shekher M."/>
            <person name="Matero A."/>
            <person name="Shah R."/>
            <person name="Swaby I.K."/>
            <person name="O'Shaughnessy A."/>
            <person name="Rodriguez M."/>
            <person name="Hoffman J."/>
            <person name="Till S."/>
            <person name="Granat S."/>
            <person name="Shohdy N."/>
            <person name="Hasegawa A."/>
            <person name="Hameed A."/>
            <person name="Lodhi M."/>
            <person name="Johnson A."/>
            <person name="Chen E."/>
            <person name="Marra M.A."/>
            <person name="Martienssen R."/>
            <person name="McCombie W.R."/>
        </authorList>
    </citation>
    <scope>NUCLEOTIDE SEQUENCE [LARGE SCALE GENOMIC DNA]</scope>
    <source>
        <strain>cv. Columbia</strain>
    </source>
</reference>
<reference key="2">
    <citation type="journal article" date="2017" name="Plant J.">
        <title>Araport11: a complete reannotation of the Arabidopsis thaliana reference genome.</title>
        <authorList>
            <person name="Cheng C.Y."/>
            <person name="Krishnakumar V."/>
            <person name="Chan A.P."/>
            <person name="Thibaud-Nissen F."/>
            <person name="Schobel S."/>
            <person name="Town C.D."/>
        </authorList>
    </citation>
    <scope>GENOME REANNOTATION</scope>
    <source>
        <strain>cv. Columbia</strain>
    </source>
</reference>
<reference key="3">
    <citation type="journal article" date="2005" name="Plant Physiol.">
        <title>Phylogenomic analysis of the receptor-like proteins of rice and Arabidopsis.</title>
        <authorList>
            <person name="Fritz-Laylin L.K."/>
            <person name="Krishnamurthy N."/>
            <person name="Toer M."/>
            <person name="Sjoelander K.V."/>
            <person name="Jones J.D."/>
        </authorList>
    </citation>
    <scope>GENE FAMILY</scope>
</reference>
<reference key="4">
    <citation type="journal article" date="2008" name="Plant Physiol.">
        <title>A genome-wide functional investigation into the roles of receptor-like proteins in Arabidopsis.</title>
        <authorList>
            <person name="Wang G."/>
            <person name="Ellendorff U."/>
            <person name="Kemp B."/>
            <person name="Mansfield J.W."/>
            <person name="Forsyth A."/>
            <person name="Mitchell K."/>
            <person name="Bastas K."/>
            <person name="Liu C.-M."/>
            <person name="Woods-Toer A."/>
            <person name="Zipfel C."/>
            <person name="de Wit P.J.G.M."/>
            <person name="Jones J.D.G."/>
            <person name="Toer M."/>
            <person name="Thomma B.P.H.J."/>
        </authorList>
    </citation>
    <scope>GENE FAMILY</scope>
    <scope>NOMENCLATURE</scope>
    <source>
        <strain>cv. Columbia</strain>
    </source>
</reference>
<organism>
    <name type="scientific">Arabidopsis thaliana</name>
    <name type="common">Mouse-ear cress</name>
    <dbReference type="NCBI Taxonomy" id="3702"/>
    <lineage>
        <taxon>Eukaryota</taxon>
        <taxon>Viridiplantae</taxon>
        <taxon>Streptophyta</taxon>
        <taxon>Embryophyta</taxon>
        <taxon>Tracheophyta</taxon>
        <taxon>Spermatophyta</taxon>
        <taxon>Magnoliopsida</taxon>
        <taxon>eudicotyledons</taxon>
        <taxon>Gunneridae</taxon>
        <taxon>Pentapetalae</taxon>
        <taxon>rosids</taxon>
        <taxon>malvids</taxon>
        <taxon>Brassicales</taxon>
        <taxon>Brassicaceae</taxon>
        <taxon>Camelineae</taxon>
        <taxon>Arabidopsis</taxon>
    </lineage>
</organism>
<gene>
    <name evidence="3" type="primary">RLP46</name>
    <name evidence="5" type="ordered locus">At4g04220</name>
    <name evidence="6" type="ORF">T27D20.9</name>
</gene>
<evidence type="ECO:0000255" key="1"/>
<evidence type="ECO:0000255" key="2">
    <source>
        <dbReference type="PROSITE-ProRule" id="PRU00498"/>
    </source>
</evidence>
<evidence type="ECO:0000303" key="3">
    <source>
    </source>
</evidence>
<evidence type="ECO:0000305" key="4"/>
<evidence type="ECO:0000312" key="5">
    <source>
        <dbReference type="Araport" id="AT4G04220"/>
    </source>
</evidence>
<evidence type="ECO:0000312" key="6">
    <source>
        <dbReference type="EMBL" id="AAC28231.1"/>
    </source>
</evidence>
<keyword id="KW-1003">Cell membrane</keyword>
<keyword id="KW-0325">Glycoprotein</keyword>
<keyword id="KW-0433">Leucine-rich repeat</keyword>
<keyword id="KW-0472">Membrane</keyword>
<keyword id="KW-0675">Receptor</keyword>
<keyword id="KW-1185">Reference proteome</keyword>
<keyword id="KW-0677">Repeat</keyword>
<keyword id="KW-0732">Signal</keyword>
<keyword id="KW-0812">Transmembrane</keyword>
<keyword id="KW-1133">Transmembrane helix</keyword>
<sequence length="811" mass="90838">MSKQCLLSCFLFFCFFIPQLSFSCPQDQRQSLLEFKNLLIHNIKDNYTAFEELGTWRPNSDCCKWLRVTCNASSPSKEVIDLNLFLLIPPGLVSSSILRPILRINSLVGLDVSFNNIQGEIPGYAFVNLTSLISLDMCCNRFNGSIPHELFSLTNLQRLDLSRNVIGGTLSGDIKELKNLQELILDENLIGGAIPSEIGSLVELLTLTLRQNMFNSSIPSSVSRLTKLKTIDLQNNFLSSKIPDDIGNLVNLSTLSLSMNKLSGGIPSSIHNLKNLETLQLENNNGLSGEIPAAWLFGLQKLKVLRLEGNNKLQWNNNGYVFPQFKLTHLSLRSCGLEGNIPDWLKNQTALVYLDLSINRLEGRFPKWLADLKIRNITLSDNRLTGSLPPNLFQRPSLYYLVLSRNNFSGQIPDTIGESQVMVLMLSENNFSGSVPKSITKIPFLKLLDLSKNRLSGEFPRFRPESYLEWLDISSNEFSGDVPAYFGGSTSMLLMSQNNFSGEFPQNFRNLSYLIRLDLHDNKISGTVASLISQLSSSVEVLSLRNNSLKGSIPEGISNLTSLKVLDLSENNLDGYLPSSLGNLTCMIKSPEPSAMTIRPYFSSYTDIPNIERLIEIESEDIFSLVVNWKNSKQVLFDRNFYLYTLLDLSKNKLHGEIPTSLGNLKSLKVLNLSNNEFSGLIPQSFGDLEKVESLDLSHNNLTGEIPKTLSKLSELNTLDLRNNKLKGRIPESPQLDRLNNPNIYANNSGICGMQIQVPCFPTQTKQPAEEKEEEDKEEEETIFSWNAAAIGCSCGFLIAVVFMSYNELWK</sequence>
<accession>F4JGB6</accession>
<accession>O81455</accession>
<name>RLP46_ARATH</name>
<feature type="signal peptide" evidence="1">
    <location>
        <begin position="1"/>
        <end position="21"/>
    </location>
</feature>
<feature type="chain" id="PRO_5003309756" description="Receptor-like protein 46">
    <location>
        <begin position="22"/>
        <end position="811"/>
    </location>
</feature>
<feature type="topological domain" description="Extracellular" evidence="1">
    <location>
        <begin position="22"/>
        <end position="782"/>
    </location>
</feature>
<feature type="transmembrane region" description="Helical" evidence="1">
    <location>
        <begin position="783"/>
        <end position="803"/>
    </location>
</feature>
<feature type="topological domain" description="Cytoplasmic" evidence="1">
    <location>
        <begin position="804"/>
        <end position="811"/>
    </location>
</feature>
<feature type="repeat" description="LRR 1" evidence="1">
    <location>
        <begin position="104"/>
        <end position="128"/>
    </location>
</feature>
<feature type="repeat" description="LRR 2" evidence="1">
    <location>
        <begin position="129"/>
        <end position="153"/>
    </location>
</feature>
<feature type="repeat" description="LRR 3" evidence="1">
    <location>
        <begin position="155"/>
        <end position="177"/>
    </location>
</feature>
<feature type="repeat" description="LRR 4" evidence="1">
    <location>
        <begin position="178"/>
        <end position="201"/>
    </location>
</feature>
<feature type="repeat" description="LRR 5" evidence="1">
    <location>
        <begin position="203"/>
        <end position="225"/>
    </location>
</feature>
<feature type="repeat" description="LRR 6" evidence="1">
    <location>
        <begin position="226"/>
        <end position="249"/>
    </location>
</feature>
<feature type="repeat" description="LRR 7" evidence="1">
    <location>
        <begin position="251"/>
        <end position="273"/>
    </location>
</feature>
<feature type="repeat" description="LRR 8" evidence="1">
    <location>
        <begin position="275"/>
        <end position="298"/>
    </location>
</feature>
<feature type="repeat" description="LRR 9" evidence="1">
    <location>
        <begin position="299"/>
        <end position="322"/>
    </location>
</feature>
<feature type="repeat" description="LRR 10" evidence="1">
    <location>
        <begin position="324"/>
        <end position="348"/>
    </location>
</feature>
<feature type="repeat" description="LRR 11" evidence="1">
    <location>
        <begin position="349"/>
        <end position="369"/>
    </location>
</feature>
<feature type="repeat" description="LRR 12" evidence="1">
    <location>
        <begin position="370"/>
        <end position="395"/>
    </location>
</feature>
<feature type="repeat" description="LRR 13" evidence="1">
    <location>
        <begin position="397"/>
        <end position="419"/>
    </location>
</feature>
<feature type="repeat" description="LRR 14" evidence="1">
    <location>
        <begin position="421"/>
        <end position="442"/>
    </location>
</feature>
<feature type="repeat" description="LRR 15" evidence="1">
    <location>
        <begin position="443"/>
        <end position="466"/>
    </location>
</feature>
<feature type="repeat" description="LRR 16" evidence="1">
    <location>
        <begin position="468"/>
        <end position="488"/>
    </location>
</feature>
<feature type="repeat" description="LRR 17" evidence="1">
    <location>
        <begin position="490"/>
        <end position="510"/>
    </location>
</feature>
<feature type="repeat" description="LRR 18" evidence="1">
    <location>
        <begin position="511"/>
        <end position="534"/>
    </location>
</feature>
<feature type="repeat" description="LRR 19" evidence="1">
    <location>
        <begin position="536"/>
        <end position="560"/>
    </location>
</feature>
<feature type="repeat" description="LRR 20" evidence="1">
    <location>
        <begin position="561"/>
        <end position="583"/>
    </location>
</feature>
<feature type="repeat" description="LRR 21" evidence="1">
    <location>
        <begin position="643"/>
        <end position="665"/>
    </location>
</feature>
<feature type="repeat" description="LRR 22" evidence="1">
    <location>
        <begin position="666"/>
        <end position="688"/>
    </location>
</feature>
<feature type="repeat" description="LRR 23" evidence="1">
    <location>
        <begin position="690"/>
        <end position="713"/>
    </location>
</feature>
<feature type="repeat" description="LRR 24" evidence="1">
    <location>
        <begin position="714"/>
        <end position="738"/>
    </location>
</feature>
<feature type="glycosylation site" description="N-linked (GlcNAc...) asparagine" evidence="2">
    <location>
        <position position="46"/>
    </location>
</feature>
<feature type="glycosylation site" description="N-linked (GlcNAc...) asparagine" evidence="2">
    <location>
        <position position="71"/>
    </location>
</feature>
<feature type="glycosylation site" description="N-linked (GlcNAc...) asparagine" evidence="2">
    <location>
        <position position="128"/>
    </location>
</feature>
<feature type="glycosylation site" description="N-linked (GlcNAc...) asparagine" evidence="2">
    <location>
        <position position="143"/>
    </location>
</feature>
<feature type="glycosylation site" description="N-linked (GlcNAc...) asparagine" evidence="2">
    <location>
        <position position="215"/>
    </location>
</feature>
<feature type="glycosylation site" description="N-linked (GlcNAc...) asparagine" evidence="2">
    <location>
        <position position="251"/>
    </location>
</feature>
<feature type="glycosylation site" description="N-linked (GlcNAc...) asparagine" evidence="2">
    <location>
        <position position="347"/>
    </location>
</feature>
<feature type="glycosylation site" description="N-linked (GlcNAc...) asparagine" evidence="2">
    <location>
        <position position="376"/>
    </location>
</feature>
<feature type="glycosylation site" description="N-linked (GlcNAc...) asparagine" evidence="2">
    <location>
        <position position="407"/>
    </location>
</feature>
<feature type="glycosylation site" description="N-linked (GlcNAc...) asparagine" evidence="2">
    <location>
        <position position="430"/>
    </location>
</feature>
<feature type="glycosylation site" description="N-linked (GlcNAc...) asparagine" evidence="2">
    <location>
        <position position="499"/>
    </location>
</feature>
<feature type="glycosylation site" description="N-linked (GlcNAc...) asparagine" evidence="2">
    <location>
        <position position="510"/>
    </location>
</feature>
<feature type="glycosylation site" description="N-linked (GlcNAc...) asparagine" evidence="2">
    <location>
        <position position="546"/>
    </location>
</feature>
<feature type="glycosylation site" description="N-linked (GlcNAc...) asparagine" evidence="2">
    <location>
        <position position="559"/>
    </location>
</feature>
<feature type="glycosylation site" description="N-linked (GlcNAc...) asparagine" evidence="2">
    <location>
        <position position="583"/>
    </location>
</feature>
<feature type="glycosylation site" description="N-linked (GlcNAc...) asparagine" evidence="2">
    <location>
        <position position="672"/>
    </location>
</feature>
<feature type="glycosylation site" description="N-linked (GlcNAc...) asparagine" evidence="2">
    <location>
        <position position="701"/>
    </location>
</feature>
<feature type="glycosylation site" description="N-linked (GlcNAc...) asparagine" evidence="2">
    <location>
        <position position="747"/>
    </location>
</feature>
<proteinExistence type="inferred from homology"/>
<protein>
    <recommendedName>
        <fullName evidence="3">Receptor-like protein 46</fullName>
        <shortName evidence="3">AtRLP46</shortName>
    </recommendedName>
</protein>
<comment type="subcellular location">
    <subcellularLocation>
        <location evidence="4">Cell membrane</location>
        <topology evidence="4">Single-pass type I membrane protein</topology>
    </subcellularLocation>
</comment>
<comment type="similarity">
    <text evidence="4">Belongs to the RLP family.</text>
</comment>
<comment type="sequence caution" evidence="4">
    <conflict type="erroneous gene model prediction">
        <sequence resource="EMBL-CDS" id="AAC28231"/>
    </conflict>
</comment>
<comment type="sequence caution" evidence="4">
    <conflict type="erroneous gene model prediction">
        <sequence resource="EMBL-CDS" id="CAB77890"/>
    </conflict>
</comment>
<dbReference type="EMBL" id="AF076274">
    <property type="protein sequence ID" value="AAC28231.1"/>
    <property type="status" value="ALT_SEQ"/>
    <property type="molecule type" value="Genomic_DNA"/>
</dbReference>
<dbReference type="EMBL" id="AL161499">
    <property type="protein sequence ID" value="CAB77890.1"/>
    <property type="status" value="ALT_SEQ"/>
    <property type="molecule type" value="Genomic_DNA"/>
</dbReference>
<dbReference type="EMBL" id="CP002687">
    <property type="protein sequence ID" value="AEE82375.1"/>
    <property type="molecule type" value="Genomic_DNA"/>
</dbReference>
<dbReference type="PIR" id="T01817">
    <property type="entry name" value="T01817"/>
</dbReference>
<dbReference type="RefSeq" id="NP_192331.2">
    <property type="nucleotide sequence ID" value="NM_116660.3"/>
</dbReference>
<dbReference type="SMR" id="F4JGB6"/>
<dbReference type="STRING" id="3702.F4JGB6"/>
<dbReference type="GlyCosmos" id="F4JGB6">
    <property type="glycosylation" value="18 sites, No reported glycans"/>
</dbReference>
<dbReference type="GlyGen" id="F4JGB6">
    <property type="glycosylation" value="18 sites"/>
</dbReference>
<dbReference type="PaxDb" id="3702-AT4G04220.1"/>
<dbReference type="EnsemblPlants" id="AT4G04220.1">
    <property type="protein sequence ID" value="AT4G04220.1"/>
    <property type="gene ID" value="AT4G04220"/>
</dbReference>
<dbReference type="GeneID" id="825737"/>
<dbReference type="Gramene" id="AT4G04220.1">
    <property type="protein sequence ID" value="AT4G04220.1"/>
    <property type="gene ID" value="AT4G04220"/>
</dbReference>
<dbReference type="KEGG" id="ath:AT4G04220"/>
<dbReference type="Araport" id="AT4G04220"/>
<dbReference type="TAIR" id="AT4G04220">
    <property type="gene designation" value="RLP46"/>
</dbReference>
<dbReference type="eggNOG" id="KOG0619">
    <property type="taxonomic scope" value="Eukaryota"/>
</dbReference>
<dbReference type="HOGENOM" id="CLU_000288_18_3_1"/>
<dbReference type="InParanoid" id="F4JGB6"/>
<dbReference type="OMA" id="QFPVGLC"/>
<dbReference type="PRO" id="PR:F4JGB6"/>
<dbReference type="Proteomes" id="UP000006548">
    <property type="component" value="Chromosome 4"/>
</dbReference>
<dbReference type="ExpressionAtlas" id="F4JGB6">
    <property type="expression patterns" value="differential"/>
</dbReference>
<dbReference type="GO" id="GO:0005886">
    <property type="term" value="C:plasma membrane"/>
    <property type="evidence" value="ECO:0007669"/>
    <property type="project" value="UniProtKB-SubCell"/>
</dbReference>
<dbReference type="FunFam" id="3.80.10.10:FF:000041">
    <property type="entry name" value="LRR receptor-like serine/threonine-protein kinase ERECTA"/>
    <property type="match status" value="2"/>
</dbReference>
<dbReference type="FunFam" id="3.80.10.10:FF:000111">
    <property type="entry name" value="LRR receptor-like serine/threonine-protein kinase ERECTA"/>
    <property type="match status" value="1"/>
</dbReference>
<dbReference type="FunFam" id="3.80.10.10:FF:000095">
    <property type="entry name" value="LRR receptor-like serine/threonine-protein kinase GSO1"/>
    <property type="match status" value="1"/>
</dbReference>
<dbReference type="Gene3D" id="3.80.10.10">
    <property type="entry name" value="Ribonuclease Inhibitor"/>
    <property type="match status" value="4"/>
</dbReference>
<dbReference type="InterPro" id="IPR001611">
    <property type="entry name" value="Leu-rich_rpt"/>
</dbReference>
<dbReference type="InterPro" id="IPR025875">
    <property type="entry name" value="Leu-rich_rpt_4"/>
</dbReference>
<dbReference type="InterPro" id="IPR003591">
    <property type="entry name" value="Leu-rich_rpt_typical-subtyp"/>
</dbReference>
<dbReference type="InterPro" id="IPR032675">
    <property type="entry name" value="LRR_dom_sf"/>
</dbReference>
<dbReference type="InterPro" id="IPR013210">
    <property type="entry name" value="LRR_N_plant-typ"/>
</dbReference>
<dbReference type="InterPro" id="IPR055414">
    <property type="entry name" value="LRR_R13L4/SHOC2-like"/>
</dbReference>
<dbReference type="PANTHER" id="PTHR27000">
    <property type="entry name" value="LEUCINE-RICH REPEAT RECEPTOR-LIKE PROTEIN KINASE FAMILY PROTEIN-RELATED"/>
    <property type="match status" value="1"/>
</dbReference>
<dbReference type="PANTHER" id="PTHR27000:SF783">
    <property type="entry name" value="MALECTIN DOMAIN-CONTAINING PROTEIN"/>
    <property type="match status" value="1"/>
</dbReference>
<dbReference type="Pfam" id="PF00560">
    <property type="entry name" value="LRR_1"/>
    <property type="match status" value="3"/>
</dbReference>
<dbReference type="Pfam" id="PF23598">
    <property type="entry name" value="LRR_14"/>
    <property type="match status" value="1"/>
</dbReference>
<dbReference type="Pfam" id="PF12799">
    <property type="entry name" value="LRR_4"/>
    <property type="match status" value="1"/>
</dbReference>
<dbReference type="Pfam" id="PF13855">
    <property type="entry name" value="LRR_8"/>
    <property type="match status" value="2"/>
</dbReference>
<dbReference type="Pfam" id="PF08263">
    <property type="entry name" value="LRRNT_2"/>
    <property type="match status" value="1"/>
</dbReference>
<dbReference type="PRINTS" id="PR00019">
    <property type="entry name" value="LEURICHRPT"/>
</dbReference>
<dbReference type="SMART" id="SM00365">
    <property type="entry name" value="LRR_SD22"/>
    <property type="match status" value="6"/>
</dbReference>
<dbReference type="SMART" id="SM00369">
    <property type="entry name" value="LRR_TYP"/>
    <property type="match status" value="7"/>
</dbReference>
<dbReference type="SUPFAM" id="SSF52058">
    <property type="entry name" value="L domain-like"/>
    <property type="match status" value="1"/>
</dbReference>
<dbReference type="SUPFAM" id="SSF52047">
    <property type="entry name" value="RNI-like"/>
    <property type="match status" value="1"/>
</dbReference>